<reference key="1">
    <citation type="journal article" date="2006" name="Proc. Natl. Acad. Sci. U.S.A.">
        <title>Molecular genetic anatomy of inter- and intraserotype variation in the human bacterial pathogen group A Streptococcus.</title>
        <authorList>
            <person name="Beres S.B."/>
            <person name="Richter E.W."/>
            <person name="Nagiec M.J."/>
            <person name="Sumby P."/>
            <person name="Porcella S.F."/>
            <person name="DeLeo F.R."/>
            <person name="Musser J.M."/>
        </authorList>
    </citation>
    <scope>NUCLEOTIDE SEQUENCE [LARGE SCALE GENOMIC DNA]</scope>
    <source>
        <strain>MGAS10750</strain>
    </source>
</reference>
<gene>
    <name evidence="1" type="primary">ecfA2</name>
    <name type="synonym">cbiO2</name>
    <name type="ordered locus">MGAS10750_Spy1961</name>
</gene>
<accession>Q1J450</accession>
<organism>
    <name type="scientific">Streptococcus pyogenes serotype M4 (strain MGAS10750)</name>
    <dbReference type="NCBI Taxonomy" id="370554"/>
    <lineage>
        <taxon>Bacteria</taxon>
        <taxon>Bacillati</taxon>
        <taxon>Bacillota</taxon>
        <taxon>Bacilli</taxon>
        <taxon>Lactobacillales</taxon>
        <taxon>Streptococcaceae</taxon>
        <taxon>Streptococcus</taxon>
    </lineage>
</organism>
<dbReference type="EC" id="7.-.-.-" evidence="1"/>
<dbReference type="EMBL" id="CP000262">
    <property type="protein sequence ID" value="ABF38911.1"/>
    <property type="molecule type" value="Genomic_DNA"/>
</dbReference>
<dbReference type="SMR" id="Q1J450"/>
<dbReference type="KEGG" id="spi:MGAS10750_Spy1961"/>
<dbReference type="HOGENOM" id="CLU_000604_1_22_9"/>
<dbReference type="Proteomes" id="UP000002434">
    <property type="component" value="Chromosome"/>
</dbReference>
<dbReference type="GO" id="GO:0043190">
    <property type="term" value="C:ATP-binding cassette (ABC) transporter complex"/>
    <property type="evidence" value="ECO:0007669"/>
    <property type="project" value="TreeGrafter"/>
</dbReference>
<dbReference type="GO" id="GO:0005524">
    <property type="term" value="F:ATP binding"/>
    <property type="evidence" value="ECO:0007669"/>
    <property type="project" value="UniProtKB-KW"/>
</dbReference>
<dbReference type="GO" id="GO:0016887">
    <property type="term" value="F:ATP hydrolysis activity"/>
    <property type="evidence" value="ECO:0007669"/>
    <property type="project" value="InterPro"/>
</dbReference>
<dbReference type="GO" id="GO:0042626">
    <property type="term" value="F:ATPase-coupled transmembrane transporter activity"/>
    <property type="evidence" value="ECO:0007669"/>
    <property type="project" value="TreeGrafter"/>
</dbReference>
<dbReference type="CDD" id="cd03225">
    <property type="entry name" value="ABC_cobalt_CbiO_domain1"/>
    <property type="match status" value="1"/>
</dbReference>
<dbReference type="FunFam" id="3.40.50.300:FF:000224">
    <property type="entry name" value="Energy-coupling factor transporter ATP-binding protein EcfA"/>
    <property type="match status" value="1"/>
</dbReference>
<dbReference type="Gene3D" id="3.40.50.300">
    <property type="entry name" value="P-loop containing nucleotide triphosphate hydrolases"/>
    <property type="match status" value="1"/>
</dbReference>
<dbReference type="InterPro" id="IPR003593">
    <property type="entry name" value="AAA+_ATPase"/>
</dbReference>
<dbReference type="InterPro" id="IPR003439">
    <property type="entry name" value="ABC_transporter-like_ATP-bd"/>
</dbReference>
<dbReference type="InterPro" id="IPR017871">
    <property type="entry name" value="ABC_transporter-like_CS"/>
</dbReference>
<dbReference type="InterPro" id="IPR015856">
    <property type="entry name" value="ABC_transpr_CbiO/EcfA_su"/>
</dbReference>
<dbReference type="InterPro" id="IPR050095">
    <property type="entry name" value="ECF_ABC_transporter_ATP-bd"/>
</dbReference>
<dbReference type="InterPro" id="IPR030946">
    <property type="entry name" value="EcfA2"/>
</dbReference>
<dbReference type="InterPro" id="IPR027417">
    <property type="entry name" value="P-loop_NTPase"/>
</dbReference>
<dbReference type="NCBIfam" id="TIGR04521">
    <property type="entry name" value="ECF_ATPase_2"/>
    <property type="match status" value="1"/>
</dbReference>
<dbReference type="PANTHER" id="PTHR43553:SF27">
    <property type="entry name" value="ENERGY-COUPLING FACTOR TRANSPORTER ATP-BINDING PROTEIN ECFA2"/>
    <property type="match status" value="1"/>
</dbReference>
<dbReference type="PANTHER" id="PTHR43553">
    <property type="entry name" value="HEAVY METAL TRANSPORTER"/>
    <property type="match status" value="1"/>
</dbReference>
<dbReference type="Pfam" id="PF00005">
    <property type="entry name" value="ABC_tran"/>
    <property type="match status" value="1"/>
</dbReference>
<dbReference type="SMART" id="SM00382">
    <property type="entry name" value="AAA"/>
    <property type="match status" value="1"/>
</dbReference>
<dbReference type="SUPFAM" id="SSF52540">
    <property type="entry name" value="P-loop containing nucleoside triphosphate hydrolases"/>
    <property type="match status" value="1"/>
</dbReference>
<dbReference type="PROSITE" id="PS00211">
    <property type="entry name" value="ABC_TRANSPORTER_1"/>
    <property type="match status" value="1"/>
</dbReference>
<dbReference type="PROSITE" id="PS50893">
    <property type="entry name" value="ABC_TRANSPORTER_2"/>
    <property type="match status" value="1"/>
</dbReference>
<dbReference type="PROSITE" id="PS51246">
    <property type="entry name" value="CBIO"/>
    <property type="match status" value="1"/>
</dbReference>
<protein>
    <recommendedName>
        <fullName evidence="1">Energy-coupling factor transporter ATP-binding protein EcfA2</fullName>
        <shortName evidence="1">ECF transporter A component EcfA2</shortName>
        <ecNumber evidence="1">7.-.-.-</ecNumber>
    </recommendedName>
</protein>
<name>ECFA2_STRPF</name>
<proteinExistence type="inferred from homology"/>
<keyword id="KW-0067">ATP-binding</keyword>
<keyword id="KW-1003">Cell membrane</keyword>
<keyword id="KW-0472">Membrane</keyword>
<keyword id="KW-0547">Nucleotide-binding</keyword>
<keyword id="KW-1278">Translocase</keyword>
<keyword id="KW-0813">Transport</keyword>
<comment type="function">
    <text evidence="1">ATP-binding (A) component of a common energy-coupling factor (ECF) ABC-transporter complex. Unlike classic ABC transporters this ECF transporter provides the energy necessary to transport a number of different substrates.</text>
</comment>
<comment type="subunit">
    <text evidence="1">Forms a stable energy-coupling factor (ECF) transporter complex composed of 2 membrane-embedded substrate-binding proteins (S component), 2 ATP-binding proteins (A component) and 2 transmembrane proteins (T component).</text>
</comment>
<comment type="subcellular location">
    <subcellularLocation>
        <location evidence="1">Cell membrane</location>
        <topology evidence="1">Peripheral membrane protein</topology>
    </subcellularLocation>
</comment>
<comment type="similarity">
    <text evidence="1">Belongs to the ABC transporter superfamily. Energy-coupling factor EcfA family.</text>
</comment>
<evidence type="ECO:0000255" key="1">
    <source>
        <dbReference type="HAMAP-Rule" id="MF_01710"/>
    </source>
</evidence>
<sequence length="280" mass="30863">MSINLQNVSYTYQAGTPFEGRALFNINLDILDGSYTAFIGHTGSGKSTIMQLLNGLHVPTTGIVSVDKQDITNHSKNKEIKSIRKHVGLVFQFPESQLFEETVLKDVAFGPQNFGVSPEEAEALAREKLALVGISENLFEKNPFELSGGQMRRVAIAGILAMQPKVLVLDEPTAGLDPKGRKELMTIFKKLHQSGMTIVLVTHLMDDVANYADFVYVLDKGKIILSGKPKTIFQQVSLLEKKQLGVPKVTKLAQRLVDRGIPISSLPITLEELREVLKHG</sequence>
<feature type="chain" id="PRO_0000288004" description="Energy-coupling factor transporter ATP-binding protein EcfA2">
    <location>
        <begin position="1"/>
        <end position="280"/>
    </location>
</feature>
<feature type="domain" description="ABC transporter" evidence="1">
    <location>
        <begin position="3"/>
        <end position="245"/>
    </location>
</feature>
<feature type="binding site" evidence="1">
    <location>
        <begin position="40"/>
        <end position="47"/>
    </location>
    <ligand>
        <name>ATP</name>
        <dbReference type="ChEBI" id="CHEBI:30616"/>
    </ligand>
</feature>